<dbReference type="EC" id="1.12.98.2"/>
<dbReference type="EMBL" id="X94356">
    <property type="protein sequence ID" value="CAA64123.1"/>
    <property type="molecule type" value="Genomic_DNA"/>
</dbReference>
<dbReference type="SMR" id="Q50840"/>
<dbReference type="UniPathway" id="UPA00640">
    <property type="reaction ID" value="UER00696"/>
</dbReference>
<dbReference type="GO" id="GO:0047068">
    <property type="term" value="F:N5,N10-methenyltetrahydromethanopterin hydrogenase activity"/>
    <property type="evidence" value="ECO:0007669"/>
    <property type="project" value="UniProtKB-UniRule"/>
</dbReference>
<dbReference type="GO" id="GO:0019386">
    <property type="term" value="P:methanogenesis, from carbon dioxide"/>
    <property type="evidence" value="ECO:0007669"/>
    <property type="project" value="UniProtKB-UniRule"/>
</dbReference>
<dbReference type="GO" id="GO:0006730">
    <property type="term" value="P:one-carbon metabolic process"/>
    <property type="evidence" value="ECO:0007669"/>
    <property type="project" value="UniProtKB-UniRule"/>
</dbReference>
<dbReference type="Gene3D" id="1.20.120.1300">
    <property type="entry name" value="Hmd, C-terminal helical subdomain"/>
    <property type="match status" value="1"/>
</dbReference>
<dbReference type="Gene3D" id="3.40.50.720">
    <property type="entry name" value="NAD(P)-binding Rossmann-like Domain"/>
    <property type="match status" value="1"/>
</dbReference>
<dbReference type="HAMAP" id="MF_01090">
    <property type="entry name" value="HMD"/>
    <property type="match status" value="1"/>
</dbReference>
<dbReference type="InterPro" id="IPR008927">
    <property type="entry name" value="6-PGluconate_DH-like_C_sf"/>
</dbReference>
<dbReference type="InterPro" id="IPR010062">
    <property type="entry name" value="HMD"/>
</dbReference>
<dbReference type="InterPro" id="IPR004889">
    <property type="entry name" value="HMD_C"/>
</dbReference>
<dbReference type="InterPro" id="IPR038182">
    <property type="entry name" value="HMD_C_sf"/>
</dbReference>
<dbReference type="InterPro" id="IPR055205">
    <property type="entry name" value="HMD_N"/>
</dbReference>
<dbReference type="InterPro" id="IPR024190">
    <property type="entry name" value="METHMP_Hmd"/>
</dbReference>
<dbReference type="InterPro" id="IPR036291">
    <property type="entry name" value="NAD(P)-bd_dom_sf"/>
</dbReference>
<dbReference type="NCBIfam" id="TIGR01723">
    <property type="entry name" value="hmd_TIGR"/>
    <property type="match status" value="1"/>
</dbReference>
<dbReference type="Pfam" id="PF03201">
    <property type="entry name" value="HMD"/>
    <property type="match status" value="1"/>
</dbReference>
<dbReference type="Pfam" id="PF22616">
    <property type="entry name" value="HMD_N"/>
    <property type="match status" value="1"/>
</dbReference>
<dbReference type="PIRSF" id="PIRSF016158">
    <property type="entry name" value="HMD"/>
    <property type="match status" value="1"/>
</dbReference>
<dbReference type="PIRSF" id="PIRSF500165">
    <property type="entry name" value="HMDI"/>
    <property type="match status" value="1"/>
</dbReference>
<dbReference type="SUPFAM" id="SSF48179">
    <property type="entry name" value="6-phosphogluconate dehydrogenase C-terminal domain-like"/>
    <property type="match status" value="1"/>
</dbReference>
<dbReference type="SUPFAM" id="SSF51735">
    <property type="entry name" value="NAD(P)-binding Rossmann-fold domains"/>
    <property type="match status" value="1"/>
</dbReference>
<name>HMD_METVO</name>
<evidence type="ECO:0000250" key="1"/>
<evidence type="ECO:0000305" key="2"/>
<reference key="1">
    <citation type="submission" date="1996-01" db="EMBL/GenBank/DDBJ databases">
        <authorList>
            <person name="Hartmann G.C."/>
            <person name="Thauer R.K."/>
        </authorList>
    </citation>
    <scope>NUCLEOTIDE SEQUENCE [GENOMIC DNA]</scope>
    <source>
        <strain>ATCC 33273 / DSM 1537 / NBRC 100457 / OCM 70 / PS</strain>
    </source>
</reference>
<gene>
    <name type="primary">hmd</name>
</gene>
<sequence>MKVAILGAGCYRTHAAAGITNFSRASEVAKQVGIPEIAMTHSTILMGAELLHLVNEIDEIVIADPCFAEGNEMVVLDNFDYAKVMEAHLAGKAEEVMPEIRDAVKAKAKELPKPPKACIHFVNPEKVGLKVTADDKDAVKDADIVITWLPKGGSQPAIIEKFVANIKEGAIVTHACTIPTPKFAKIFKDLGRDDLNIISYHPGAVPEMKGQVFISEGFATEEAVENFFEIANTARGVAFKMPANLISPVCDMGSAVTAPVYAGILAYRDAVTQILGAPADFAQMMADEAITQILELMRNEGIKGMEDKLDPKALTGTADSMCFGPLADILPASLKVLEKHGKQ</sequence>
<accession>Q50840</accession>
<keyword id="KW-0484">Methanogenesis</keyword>
<keyword id="KW-0554">One-carbon metabolism</keyword>
<keyword id="KW-0560">Oxidoreductase</keyword>
<proteinExistence type="inferred from homology"/>
<feature type="chain" id="PRO_0000218515" description="5,10-methenyltetrahydromethanopterin hydrogenase">
    <location>
        <begin position="1"/>
        <end position="343"/>
    </location>
</feature>
<comment type="function">
    <text evidence="1">Catalyzes the reversible reduction of methenyl-H(4)MPT(+) to methylene-H(4)MPT.</text>
</comment>
<comment type="catalytic activity">
    <reaction>
        <text>5,10-methenyl-5,6,7,8-tetrahydromethanopterin + H2 = 5,10-methylenetetrahydromethanopterin + H(+)</text>
        <dbReference type="Rhea" id="RHEA:20017"/>
        <dbReference type="ChEBI" id="CHEBI:15378"/>
        <dbReference type="ChEBI" id="CHEBI:18276"/>
        <dbReference type="ChEBI" id="CHEBI:57818"/>
        <dbReference type="ChEBI" id="CHEBI:58337"/>
        <dbReference type="EC" id="1.12.98.2"/>
    </reaction>
</comment>
<comment type="pathway">
    <text>One-carbon metabolism; methanogenesis from CO(2); 5,10-methylene-5,6,7,8-tetrahydromethanopterin from 5,10-methenyl-5,6,7,8-tetrahydromethanopterin (hydrogen route): step 1/1.</text>
</comment>
<comment type="similarity">
    <text evidence="2">Belongs to the HMD family.</text>
</comment>
<protein>
    <recommendedName>
        <fullName>5,10-methenyltetrahydromethanopterin hydrogenase</fullName>
        <ecNumber>1.12.98.2</ecNumber>
    </recommendedName>
    <alternativeName>
        <fullName>H(2)-dependent methylene-H(4)MPT dehydrogenase</fullName>
    </alternativeName>
    <alternativeName>
        <fullName>H(2)-forming N(5),N(10)-methylenetetrahydromethanopterin dehydrogenase</fullName>
    </alternativeName>
    <alternativeName>
        <fullName>N(5),N(10)-methenyltetrahydromethanopterin hydrogenase</fullName>
    </alternativeName>
</protein>
<organism>
    <name type="scientific">Methanococcus voltae</name>
    <dbReference type="NCBI Taxonomy" id="2188"/>
    <lineage>
        <taxon>Archaea</taxon>
        <taxon>Methanobacteriati</taxon>
        <taxon>Methanobacteriota</taxon>
        <taxon>Methanomada group</taxon>
        <taxon>Methanococci</taxon>
        <taxon>Methanococcales</taxon>
        <taxon>Methanococcaceae</taxon>
        <taxon>Methanococcus</taxon>
    </lineage>
</organism>